<reference key="1">
    <citation type="journal article" date="2016" name="Genom Data">
        <title>The draft genome sequence and annotation of the desert woodrat Neotoma lepida.</title>
        <authorList>
            <person name="Campbell M."/>
            <person name="Oakeson K.F."/>
            <person name="Yandell M."/>
            <person name="Halpert J.R."/>
            <person name="Dearing D."/>
        </authorList>
    </citation>
    <scope>NUCLEOTIDE SEQUENCE [LARGE SCALE GENOMIC DNA]</scope>
</reference>
<accession>A0A1A6FVD4</accession>
<name>APOC2_NEOLE</name>
<comment type="function">
    <text evidence="1">Component of chylomicrons, very low-density lipoproteins (VLDL), low-density lipoproteins (LDL), and high-density lipoproteins (HDL) in plasma. Plays an important role in lipoprotein metabolism as an activator of lipoprotein lipase.</text>
</comment>
<comment type="subcellular location">
    <subcellularLocation>
        <location evidence="1">Secreted</location>
    </subcellularLocation>
</comment>
<comment type="PTM">
    <text evidence="1">Proapolipoprotein C-II is synthesized as a sialic acid containing glycoprotein which is subsequently desialylated prior to its proteolytic processing.</text>
</comment>
<comment type="PTM">
    <text evidence="1">Proapolipoprotein C-II, the major form found in plasma undergoes proteolytic cleavage of its N-terminal hexapeptide to generate the mature form apolipoprotein C-II, which occurs as the minor form in plasma.</text>
</comment>
<comment type="similarity">
    <text evidence="3">Belongs to the apolipoprotein C2 family.</text>
</comment>
<organism>
    <name type="scientific">Neotoma lepida</name>
    <name type="common">Desert woodrat</name>
    <dbReference type="NCBI Taxonomy" id="56216"/>
    <lineage>
        <taxon>Eukaryota</taxon>
        <taxon>Metazoa</taxon>
        <taxon>Chordata</taxon>
        <taxon>Craniata</taxon>
        <taxon>Vertebrata</taxon>
        <taxon>Euteleostomi</taxon>
        <taxon>Mammalia</taxon>
        <taxon>Eutheria</taxon>
        <taxon>Euarchontoglires</taxon>
        <taxon>Glires</taxon>
        <taxon>Rodentia</taxon>
        <taxon>Myomorpha</taxon>
        <taxon>Muroidea</taxon>
        <taxon>Cricetidae</taxon>
        <taxon>Neotominae</taxon>
        <taxon>Neotoma</taxon>
    </lineage>
</organism>
<keyword id="KW-0162">Chylomicron</keyword>
<keyword id="KW-0345">HDL</keyword>
<keyword id="KW-0427">LDL</keyword>
<keyword id="KW-0442">Lipid degradation</keyword>
<keyword id="KW-0443">Lipid metabolism</keyword>
<keyword id="KW-0445">Lipid transport</keyword>
<keyword id="KW-1185">Reference proteome</keyword>
<keyword id="KW-0964">Secreted</keyword>
<keyword id="KW-0732">Signal</keyword>
<keyword id="KW-0813">Transport</keyword>
<keyword id="KW-0850">VLDL</keyword>
<protein>
    <recommendedName>
        <fullName>Apolipoprotein C-II</fullName>
        <shortName>Apo-CII</shortName>
        <shortName>ApoC-II</shortName>
    </recommendedName>
    <alternativeName>
        <fullName>Apolipoprotein C2</fullName>
    </alternativeName>
    <component>
        <recommendedName>
            <fullName>Proapolipoprotein C-II</fullName>
            <shortName>ProapoC-II</shortName>
        </recommendedName>
    </component>
</protein>
<evidence type="ECO:0000250" key="1">
    <source>
        <dbReference type="UniProtKB" id="P02655"/>
    </source>
</evidence>
<evidence type="ECO:0000255" key="2"/>
<evidence type="ECO:0000305" key="3"/>
<sequence length="100" mass="11001">MGSRFLLALFLVLLVLGYEVQGSQQIQQDEAGSLALLNKLPESLSSYWDIAKAAVGDLYEKTYLTSVDEKLRDMYSKSSAAVSTYAGIFTDQILTLLKGE</sequence>
<dbReference type="EMBL" id="LZPO01117068">
    <property type="protein sequence ID" value="OBS57520.1"/>
    <property type="molecule type" value="Genomic_DNA"/>
</dbReference>
<dbReference type="SMR" id="A0A1A6FVD4"/>
<dbReference type="STRING" id="56216.A0A1A6FVD4"/>
<dbReference type="OrthoDB" id="9881800at2759"/>
<dbReference type="Proteomes" id="UP000092124">
    <property type="component" value="Unassembled WGS sequence"/>
</dbReference>
<dbReference type="GO" id="GO:0042627">
    <property type="term" value="C:chylomicron"/>
    <property type="evidence" value="ECO:0007669"/>
    <property type="project" value="UniProtKB-KW"/>
</dbReference>
<dbReference type="GO" id="GO:0034364">
    <property type="term" value="C:high-density lipoprotein particle"/>
    <property type="evidence" value="ECO:0007669"/>
    <property type="project" value="UniProtKB-KW"/>
</dbReference>
<dbReference type="GO" id="GO:0034362">
    <property type="term" value="C:low-density lipoprotein particle"/>
    <property type="evidence" value="ECO:0007669"/>
    <property type="project" value="UniProtKB-KW"/>
</dbReference>
<dbReference type="GO" id="GO:0034361">
    <property type="term" value="C:very-low-density lipoprotein particle"/>
    <property type="evidence" value="ECO:0007669"/>
    <property type="project" value="UniProtKB-KW"/>
</dbReference>
<dbReference type="GO" id="GO:0016004">
    <property type="term" value="F:phospholipase activator activity"/>
    <property type="evidence" value="ECO:0007669"/>
    <property type="project" value="TreeGrafter"/>
</dbReference>
<dbReference type="GO" id="GO:0043274">
    <property type="term" value="F:phospholipase binding"/>
    <property type="evidence" value="ECO:0007669"/>
    <property type="project" value="TreeGrafter"/>
</dbReference>
<dbReference type="GO" id="GO:0016042">
    <property type="term" value="P:lipid catabolic process"/>
    <property type="evidence" value="ECO:0007669"/>
    <property type="project" value="UniProtKB-KW"/>
</dbReference>
<dbReference type="GO" id="GO:0006869">
    <property type="term" value="P:lipid transport"/>
    <property type="evidence" value="ECO:0007669"/>
    <property type="project" value="UniProtKB-KW"/>
</dbReference>
<dbReference type="GO" id="GO:0060697">
    <property type="term" value="P:positive regulation of phospholipid catabolic process"/>
    <property type="evidence" value="ECO:0007669"/>
    <property type="project" value="TreeGrafter"/>
</dbReference>
<dbReference type="Gene3D" id="1.10.1440.10">
    <property type="entry name" value="Apolipoprotein C-II"/>
    <property type="match status" value="1"/>
</dbReference>
<dbReference type="InterPro" id="IPR008019">
    <property type="entry name" value="Apo-CII"/>
</dbReference>
<dbReference type="InterPro" id="IPR023121">
    <property type="entry name" value="ApoC-II_dom_sf"/>
</dbReference>
<dbReference type="PANTHER" id="PTHR16566">
    <property type="entry name" value="APOLIPOPROTEIN C-II"/>
    <property type="match status" value="1"/>
</dbReference>
<dbReference type="PANTHER" id="PTHR16566:SF0">
    <property type="entry name" value="APOLIPOPROTEIN C-II"/>
    <property type="match status" value="1"/>
</dbReference>
<dbReference type="Pfam" id="PF05355">
    <property type="entry name" value="Apo-CII"/>
    <property type="match status" value="1"/>
</dbReference>
<feature type="signal peptide" evidence="2">
    <location>
        <begin position="1"/>
        <end position="22"/>
    </location>
</feature>
<feature type="chain" id="PRO_0000454004" description="Proapolipoprotein C-II">
    <location>
        <begin position="23"/>
        <end position="100"/>
    </location>
</feature>
<feature type="chain" id="PRO_5008345090" description="Apolipoprotein C-II" evidence="1">
    <location>
        <begin position="29"/>
        <end position="100"/>
    </location>
</feature>
<feature type="region of interest" description="Lipid binding" evidence="1">
    <location>
        <begin position="66"/>
        <end position="74"/>
    </location>
</feature>
<feature type="region of interest" description="Lipoprotein lipase cofactor" evidence="1">
    <location>
        <begin position="78"/>
        <end position="100"/>
    </location>
</feature>
<proteinExistence type="inferred from homology"/>
<gene>
    <name type="primary">Apoc2</name>
</gene>